<accession>Q9FQ11</accession>
<proteinExistence type="evidence at protein level"/>
<sequence>MDKLSGSARLMIVSDLDHTMVDHHDEENLSLLRFGALWESVYCEDSLLVFSTGRSPTLYKELRKEKPMLTPDITIMSVGTEITYGEAMVPDDGWEEYLNNKWDRNIVVAETVSFSELKLQPETEQRPHKVSFFVDKKNAQEVIKSVAERLDKCGLDAKIIYSGGQDLDILPQGAGKGQALAYLLEKLSSCGKPPNNTLVCGDSGNDAELFSIPGVHGVMVSNAQEELLQWYTENAKDNPKIIHSNERCAAGIIQAIGHFKLGPNISPRDLQFPYAKEASFKPTDAVVKFYVLYEKWRRAEVPKSDSVIKYFKNITHANGVTIHPAGLELSLHASIDALGSCYGDKQGRKYRAWVDRLFITQTGSDSWVGRFDLWESEGDVRVCSLSSLALILKAESPEGFVLTHIQKTWLNGYSSGVEQAFKL</sequence>
<reference key="1">
    <citation type="journal article" date="2000" name="Proc. Natl. Acad. Sci. U.S.A.">
        <title>Purification, molecular cloning, and sequence analysis of sucrose-6F-phosphate phosphohydrolase from plants.</title>
        <authorList>
            <person name="Lunn J.E."/>
            <person name="Ashton A.R."/>
            <person name="Hatch M.D."/>
            <person name="Heldt H.W."/>
        </authorList>
    </citation>
    <scope>NUCLEOTIDE SEQUENCE [MRNA]</scope>
    <scope>BIOPHYSICOCHEMICAL PROPERTIES</scope>
</reference>
<reference key="2">
    <citation type="journal article" date="2003" name="Gene">
        <title>Sucrose-phosphatase gene families in plants.</title>
        <authorList>
            <person name="Lunn J.E."/>
        </authorList>
    </citation>
    <scope>GENE FAMILY</scope>
    <scope>NOMENCLATURE</scope>
</reference>
<keyword id="KW-0378">Hydrolase</keyword>
<keyword id="KW-0460">Magnesium</keyword>
<keyword id="KW-1185">Reference proteome</keyword>
<organism>
    <name type="scientific">Zea mays</name>
    <name type="common">Maize</name>
    <dbReference type="NCBI Taxonomy" id="4577"/>
    <lineage>
        <taxon>Eukaryota</taxon>
        <taxon>Viridiplantae</taxon>
        <taxon>Streptophyta</taxon>
        <taxon>Embryophyta</taxon>
        <taxon>Tracheophyta</taxon>
        <taxon>Spermatophyta</taxon>
        <taxon>Magnoliopsida</taxon>
        <taxon>Liliopsida</taxon>
        <taxon>Poales</taxon>
        <taxon>Poaceae</taxon>
        <taxon>PACMAD clade</taxon>
        <taxon>Panicoideae</taxon>
        <taxon>Andropogonodae</taxon>
        <taxon>Andropogoneae</taxon>
        <taxon>Tripsacinae</taxon>
        <taxon>Zea</taxon>
    </lineage>
</organism>
<name>SPP1_MAIZE</name>
<gene>
    <name type="primary">SPP1</name>
</gene>
<protein>
    <recommendedName>
        <fullName>Sucrose-phosphatase 1</fullName>
        <shortName>ZmSPP1</shortName>
        <ecNumber>3.1.3.24</ecNumber>
    </recommendedName>
</protein>
<dbReference type="EC" id="3.1.3.24"/>
<dbReference type="EMBL" id="AF283564">
    <property type="protein sequence ID" value="AAG31074.1"/>
    <property type="molecule type" value="mRNA"/>
</dbReference>
<dbReference type="RefSeq" id="NP_001105006.1">
    <property type="nucleotide sequence ID" value="NM_001111536.2"/>
</dbReference>
<dbReference type="SMR" id="Q9FQ11"/>
<dbReference type="FunCoup" id="Q9FQ11">
    <property type="interactions" value="478"/>
</dbReference>
<dbReference type="STRING" id="4577.Q9FQ11"/>
<dbReference type="PaxDb" id="4577-GRMZM2G055489_P02"/>
<dbReference type="MaizeGDB" id="403253"/>
<dbReference type="eggNOG" id="ENOG502QTVT">
    <property type="taxonomic scope" value="Eukaryota"/>
</dbReference>
<dbReference type="InParanoid" id="Q9FQ11"/>
<dbReference type="BRENDA" id="3.1.3.24">
    <property type="organism ID" value="6752"/>
</dbReference>
<dbReference type="UniPathway" id="UPA00371">
    <property type="reaction ID" value="UER00546"/>
</dbReference>
<dbReference type="Proteomes" id="UP000007305">
    <property type="component" value="Unplaced"/>
</dbReference>
<dbReference type="ExpressionAtlas" id="Q9FQ11">
    <property type="expression patterns" value="baseline and differential"/>
</dbReference>
<dbReference type="GO" id="GO:0000287">
    <property type="term" value="F:magnesium ion binding"/>
    <property type="evidence" value="ECO:0007669"/>
    <property type="project" value="InterPro"/>
</dbReference>
<dbReference type="GO" id="GO:0050307">
    <property type="term" value="F:sucrose-phosphate phosphatase activity"/>
    <property type="evidence" value="ECO:0007669"/>
    <property type="project" value="UniProtKB-EC"/>
</dbReference>
<dbReference type="GO" id="GO:0005986">
    <property type="term" value="P:sucrose biosynthetic process"/>
    <property type="evidence" value="ECO:0007669"/>
    <property type="project" value="UniProtKB-UniPathway"/>
</dbReference>
<dbReference type="CDD" id="cd02605">
    <property type="entry name" value="HAD_SPP"/>
    <property type="match status" value="1"/>
</dbReference>
<dbReference type="Gene3D" id="3.10.450.50">
    <property type="match status" value="1"/>
</dbReference>
<dbReference type="Gene3D" id="3.90.1070.10">
    <property type="match status" value="1"/>
</dbReference>
<dbReference type="Gene3D" id="3.40.50.1000">
    <property type="entry name" value="HAD superfamily/HAD-like"/>
    <property type="match status" value="1"/>
</dbReference>
<dbReference type="InterPro" id="IPR036412">
    <property type="entry name" value="HAD-like_sf"/>
</dbReference>
<dbReference type="InterPro" id="IPR006379">
    <property type="entry name" value="HAD-SF_hydro_IIB"/>
</dbReference>
<dbReference type="InterPro" id="IPR023214">
    <property type="entry name" value="HAD_sf"/>
</dbReference>
<dbReference type="InterPro" id="IPR032710">
    <property type="entry name" value="NTF2-like_dom_sf"/>
</dbReference>
<dbReference type="InterPro" id="IPR006380">
    <property type="entry name" value="SPP-like_dom"/>
</dbReference>
<dbReference type="InterPro" id="IPR013679">
    <property type="entry name" value="SPP_C"/>
</dbReference>
<dbReference type="InterPro" id="IPR051518">
    <property type="entry name" value="Sucrose_Phosphatase"/>
</dbReference>
<dbReference type="InterPro" id="IPR012847">
    <property type="entry name" value="Sucrose_phosphatase_pln/cyn"/>
</dbReference>
<dbReference type="NCBIfam" id="TIGR01484">
    <property type="entry name" value="HAD-SF-IIB"/>
    <property type="match status" value="1"/>
</dbReference>
<dbReference type="NCBIfam" id="TIGR01482">
    <property type="entry name" value="SPP-subfamily"/>
    <property type="match status" value="1"/>
</dbReference>
<dbReference type="NCBIfam" id="TIGR01485">
    <property type="entry name" value="SPP_plant-cyano"/>
    <property type="match status" value="1"/>
</dbReference>
<dbReference type="PANTHER" id="PTHR46521">
    <property type="entry name" value="SUCROSE-PHOSPHATASE 2-RELATED"/>
    <property type="match status" value="1"/>
</dbReference>
<dbReference type="PANTHER" id="PTHR46521:SF4">
    <property type="entry name" value="SUCROSE-PHOSPHATASE 2-RELATED"/>
    <property type="match status" value="1"/>
</dbReference>
<dbReference type="Pfam" id="PF05116">
    <property type="entry name" value="S6PP"/>
    <property type="match status" value="1"/>
</dbReference>
<dbReference type="Pfam" id="PF08472">
    <property type="entry name" value="S6PP_C"/>
    <property type="match status" value="1"/>
</dbReference>
<dbReference type="SFLD" id="SFLDG01141">
    <property type="entry name" value="C2.B.1:_Sucrose_Phosphatase_Li"/>
    <property type="match status" value="1"/>
</dbReference>
<dbReference type="SFLD" id="SFLDF00043">
    <property type="entry name" value="sucrose-phosphatase"/>
    <property type="match status" value="1"/>
</dbReference>
<dbReference type="SUPFAM" id="SSF56784">
    <property type="entry name" value="HAD-like"/>
    <property type="match status" value="1"/>
</dbReference>
<dbReference type="SUPFAM" id="SSF54427">
    <property type="entry name" value="NTF2-like"/>
    <property type="match status" value="1"/>
</dbReference>
<comment type="function">
    <text>Catalyzes the final step of sucrose synthesis. Inactive with fructose 6-phosphate as substrate.</text>
</comment>
<comment type="catalytic activity">
    <reaction>
        <text>sucrose 6(F)-phosphate + H2O = sucrose + phosphate</text>
        <dbReference type="Rhea" id="RHEA:19289"/>
        <dbReference type="ChEBI" id="CHEBI:15377"/>
        <dbReference type="ChEBI" id="CHEBI:17992"/>
        <dbReference type="ChEBI" id="CHEBI:43474"/>
        <dbReference type="ChEBI" id="CHEBI:57723"/>
        <dbReference type="EC" id="3.1.3.24"/>
    </reaction>
</comment>
<comment type="cofactor">
    <cofactor evidence="1">
        <name>Mg(2+)</name>
        <dbReference type="ChEBI" id="CHEBI:18420"/>
    </cofactor>
</comment>
<comment type="biophysicochemical properties">
    <kinetics>
        <Vmax evidence="2">370.0 nmol/min/mg enzyme</Vmax>
    </kinetics>
</comment>
<comment type="pathway">
    <text>Glycan biosynthesis; sucrose biosynthesis; sucrose from D-fructose 6-phosphate and UDP-alpha-D-glucose: step 2/2.</text>
</comment>
<comment type="subunit">
    <text evidence="1">Homodimer.</text>
</comment>
<comment type="similarity">
    <text evidence="3">Belongs to the sucrose phosphatase family.</text>
</comment>
<evidence type="ECO:0000250" key="1"/>
<evidence type="ECO:0000269" key="2">
    <source>
    </source>
</evidence>
<evidence type="ECO:0000305" key="3"/>
<feature type="chain" id="PRO_0000350620" description="Sucrose-phosphatase 1">
    <location>
        <begin position="1"/>
        <end position="423"/>
    </location>
</feature>